<proteinExistence type="inferred from homology"/>
<dbReference type="EC" id="2.6.1.57" evidence="1"/>
<dbReference type="EMBL" id="CP000580">
    <property type="protein sequence ID" value="ABO01127.1"/>
    <property type="molecule type" value="Genomic_DNA"/>
</dbReference>
<dbReference type="SMR" id="A3Q7J9"/>
<dbReference type="KEGG" id="mjl:Mjls_5363"/>
<dbReference type="HOGENOM" id="CLU_017584_3_3_11"/>
<dbReference type="BioCyc" id="MSP164757:G1G8C-5421-MONOMER"/>
<dbReference type="GO" id="GO:0008793">
    <property type="term" value="F:aromatic-amino-acid transaminase activity"/>
    <property type="evidence" value="ECO:0007669"/>
    <property type="project" value="UniProtKB-UniRule"/>
</dbReference>
<dbReference type="GO" id="GO:0004400">
    <property type="term" value="F:histidinol-phosphate transaminase activity"/>
    <property type="evidence" value="ECO:0007669"/>
    <property type="project" value="InterPro"/>
</dbReference>
<dbReference type="GO" id="GO:0030170">
    <property type="term" value="F:pyridoxal phosphate binding"/>
    <property type="evidence" value="ECO:0007669"/>
    <property type="project" value="UniProtKB-UniRule"/>
</dbReference>
<dbReference type="GO" id="GO:0000105">
    <property type="term" value="P:L-histidine biosynthetic process"/>
    <property type="evidence" value="ECO:0007669"/>
    <property type="project" value="InterPro"/>
</dbReference>
<dbReference type="CDD" id="cd00609">
    <property type="entry name" value="AAT_like"/>
    <property type="match status" value="1"/>
</dbReference>
<dbReference type="Gene3D" id="3.90.1150.10">
    <property type="entry name" value="Aspartate Aminotransferase, domain 1"/>
    <property type="match status" value="1"/>
</dbReference>
<dbReference type="Gene3D" id="3.40.640.10">
    <property type="entry name" value="Type I PLP-dependent aspartate aminotransferase-like (Major domain)"/>
    <property type="match status" value="1"/>
</dbReference>
<dbReference type="HAMAP" id="MF_01023">
    <property type="entry name" value="HisC_aminotrans_2"/>
    <property type="match status" value="1"/>
</dbReference>
<dbReference type="HAMAP" id="MF_01513">
    <property type="entry name" value="Phe_aminotrans_2"/>
    <property type="match status" value="1"/>
</dbReference>
<dbReference type="InterPro" id="IPR001917">
    <property type="entry name" value="Aminotrans_II_pyridoxalP_BS"/>
</dbReference>
<dbReference type="InterPro" id="IPR004839">
    <property type="entry name" value="Aminotransferase_I/II_large"/>
</dbReference>
<dbReference type="InterPro" id="IPR024892">
    <property type="entry name" value="ArAT"/>
</dbReference>
<dbReference type="InterPro" id="IPR005861">
    <property type="entry name" value="HisP_aminotrans"/>
</dbReference>
<dbReference type="InterPro" id="IPR050106">
    <property type="entry name" value="HistidinolP_aminotransfase"/>
</dbReference>
<dbReference type="InterPro" id="IPR015424">
    <property type="entry name" value="PyrdxlP-dep_Trfase"/>
</dbReference>
<dbReference type="InterPro" id="IPR015421">
    <property type="entry name" value="PyrdxlP-dep_Trfase_major"/>
</dbReference>
<dbReference type="InterPro" id="IPR015422">
    <property type="entry name" value="PyrdxlP-dep_Trfase_small"/>
</dbReference>
<dbReference type="NCBIfam" id="TIGR01141">
    <property type="entry name" value="hisC"/>
    <property type="match status" value="1"/>
</dbReference>
<dbReference type="NCBIfam" id="NF002878">
    <property type="entry name" value="PRK03321.1"/>
    <property type="match status" value="1"/>
</dbReference>
<dbReference type="PANTHER" id="PTHR43643:SF3">
    <property type="entry name" value="HISTIDINOL-PHOSPHATE AMINOTRANSFERASE"/>
    <property type="match status" value="1"/>
</dbReference>
<dbReference type="PANTHER" id="PTHR43643">
    <property type="entry name" value="HISTIDINOL-PHOSPHATE AMINOTRANSFERASE 2"/>
    <property type="match status" value="1"/>
</dbReference>
<dbReference type="Pfam" id="PF00155">
    <property type="entry name" value="Aminotran_1_2"/>
    <property type="match status" value="1"/>
</dbReference>
<dbReference type="SUPFAM" id="SSF53383">
    <property type="entry name" value="PLP-dependent transferases"/>
    <property type="match status" value="1"/>
</dbReference>
<dbReference type="PROSITE" id="PS00599">
    <property type="entry name" value="AA_TRANSFER_CLASS_2"/>
    <property type="match status" value="1"/>
</dbReference>
<protein>
    <recommendedName>
        <fullName evidence="1">Aromatic amino acid aminotransferase</fullName>
        <shortName evidence="1">ArAT</shortName>
        <ecNumber evidence="1">2.6.1.57</ecNumber>
    </recommendedName>
</protein>
<accession>A3Q7J9</accession>
<reference key="1">
    <citation type="submission" date="2007-02" db="EMBL/GenBank/DDBJ databases">
        <title>Complete sequence of Mycobacterium sp. JLS.</title>
        <authorList>
            <consortium name="US DOE Joint Genome Institute"/>
            <person name="Copeland A."/>
            <person name="Lucas S."/>
            <person name="Lapidus A."/>
            <person name="Barry K."/>
            <person name="Detter J.C."/>
            <person name="Glavina del Rio T."/>
            <person name="Hammon N."/>
            <person name="Israni S."/>
            <person name="Dalin E."/>
            <person name="Tice H."/>
            <person name="Pitluck S."/>
            <person name="Chain P."/>
            <person name="Malfatti S."/>
            <person name="Shin M."/>
            <person name="Vergez L."/>
            <person name="Schmutz J."/>
            <person name="Larimer F."/>
            <person name="Land M."/>
            <person name="Hauser L."/>
            <person name="Kyrpides N."/>
            <person name="Mikhailova N."/>
            <person name="Miller C.D."/>
            <person name="Anderson A.J."/>
            <person name="Sims R.C."/>
            <person name="Richardson P."/>
        </authorList>
    </citation>
    <scope>NUCLEOTIDE SEQUENCE [LARGE SCALE GENOMIC DNA]</scope>
    <source>
        <strain>JLS</strain>
    </source>
</reference>
<feature type="chain" id="PRO_1000024497" description="Aromatic amino acid aminotransferase">
    <location>
        <begin position="1"/>
        <end position="358"/>
    </location>
</feature>
<feature type="modified residue" description="N6-(pyridoxal phosphate)lysine" evidence="1">
    <location>
        <position position="222"/>
    </location>
</feature>
<evidence type="ECO:0000255" key="1">
    <source>
        <dbReference type="HAMAP-Rule" id="MF_01513"/>
    </source>
</evidence>
<organism>
    <name type="scientific">Mycobacterium sp. (strain JLS)</name>
    <dbReference type="NCBI Taxonomy" id="164757"/>
    <lineage>
        <taxon>Bacteria</taxon>
        <taxon>Bacillati</taxon>
        <taxon>Actinomycetota</taxon>
        <taxon>Actinomycetes</taxon>
        <taxon>Mycobacteriales</taxon>
        <taxon>Mycobacteriaceae</taxon>
        <taxon>Mycobacterium</taxon>
    </lineage>
</organism>
<comment type="function">
    <text evidence="1">Aminotransferase that catalyzes the conversion of aromatic amino acids and 2-oxoglutarate into corresponding aromatic oxo acids and L-glutamate.</text>
</comment>
<comment type="catalytic activity">
    <reaction evidence="1">
        <text>an aromatic L-alpha-amino acid + 2-oxoglutarate = an aromatic oxo-acid + L-glutamate</text>
        <dbReference type="Rhea" id="RHEA:17533"/>
        <dbReference type="ChEBI" id="CHEBI:16810"/>
        <dbReference type="ChEBI" id="CHEBI:29985"/>
        <dbReference type="ChEBI" id="CHEBI:73309"/>
        <dbReference type="ChEBI" id="CHEBI:84824"/>
        <dbReference type="EC" id="2.6.1.57"/>
    </reaction>
</comment>
<comment type="cofactor">
    <cofactor evidence="1">
        <name>pyridoxal 5'-phosphate</name>
        <dbReference type="ChEBI" id="CHEBI:597326"/>
    </cofactor>
</comment>
<comment type="subunit">
    <text evidence="1">Homodimer.</text>
</comment>
<comment type="similarity">
    <text evidence="1">Belongs to the class-II pyridoxal-phosphate-dependent aminotransferase family.</text>
</comment>
<name>PATR_MYCSJ</name>
<gene>
    <name evidence="1" type="primary">pat</name>
    <name type="ordered locus">Mjls_5363</name>
</gene>
<sequence>MTARLRPELADIPAYTPGKTVPGAIKIASNETVHGPLPSVRAAIEKATDQLNRYPDNGYLELREHLASHLDKNLGAGAFTPEQIAVGCGSVSLCQQLIQITSSVGDEVIFAWRSFEIYPLQVRTAGATPVQVPLRDHTHDLDAMLAAITDRTRLIFVCNPNNPTSTVVDPAALKRFVEAVPPHILVVIDEAYVEYIRGDQVPGSFGLVRAHPNVVVLRTFSKAYGLAGLRIGYAVADADIVTALGKVYVPFSATSISQAAAIASIDAADELLARTDQVVAERDRVTAALREAGFTLPPSQSNFVWLPLAERTLDFVRRAAENRLVVRPYGEDGVRVTIAAPHENDAFLEFARNWIGQP</sequence>
<keyword id="KW-0032">Aminotransferase</keyword>
<keyword id="KW-0663">Pyridoxal phosphate</keyword>
<keyword id="KW-0808">Transferase</keyword>